<comment type="function">
    <text evidence="1">Binds to DNA and alters its conformation. May be involved in regulation of gene expression, nucleoid organization and DNA protection.</text>
</comment>
<comment type="subunit">
    <text evidence="1">Homodimer.</text>
</comment>
<comment type="subcellular location">
    <subcellularLocation>
        <location evidence="1">Cytoplasm</location>
        <location evidence="1">Nucleoid</location>
    </subcellularLocation>
</comment>
<comment type="similarity">
    <text evidence="1">Belongs to the YbaB/EbfC family.</text>
</comment>
<name>YAAK_BACSU</name>
<keyword id="KW-0963">Cytoplasm</keyword>
<keyword id="KW-0238">DNA-binding</keyword>
<keyword id="KW-1185">Reference proteome</keyword>
<accession>P24281</accession>
<gene>
    <name type="primary">yaaK</name>
    <name type="ordered locus">BSU00200</name>
</gene>
<proteinExistence type="inferred from homology"/>
<evidence type="ECO:0000255" key="1">
    <source>
        <dbReference type="HAMAP-Rule" id="MF_00274"/>
    </source>
</evidence>
<evidence type="ECO:0000256" key="2">
    <source>
        <dbReference type="SAM" id="MobiDB-lite"/>
    </source>
</evidence>
<dbReference type="EMBL" id="X17014">
    <property type="protein sequence ID" value="CAA34878.1"/>
    <property type="molecule type" value="Genomic_DNA"/>
</dbReference>
<dbReference type="EMBL" id="D26185">
    <property type="protein sequence ID" value="BAA05256.1"/>
    <property type="molecule type" value="Genomic_DNA"/>
</dbReference>
<dbReference type="EMBL" id="AL009126">
    <property type="protein sequence ID" value="CAB11796.1"/>
    <property type="molecule type" value="Genomic_DNA"/>
</dbReference>
<dbReference type="PIR" id="S13787">
    <property type="entry name" value="S13787"/>
</dbReference>
<dbReference type="RefSeq" id="WP_003225427.1">
    <property type="nucleotide sequence ID" value="NZ_OZ025638.1"/>
</dbReference>
<dbReference type="SMR" id="P24281"/>
<dbReference type="FunCoup" id="P24281">
    <property type="interactions" value="308"/>
</dbReference>
<dbReference type="STRING" id="224308.BSU00200"/>
<dbReference type="jPOST" id="P24281"/>
<dbReference type="PaxDb" id="224308-BSU00200"/>
<dbReference type="EnsemblBacteria" id="CAB11796">
    <property type="protein sequence ID" value="CAB11796"/>
    <property type="gene ID" value="BSU_00200"/>
</dbReference>
<dbReference type="GeneID" id="937027"/>
<dbReference type="KEGG" id="bsu:BSU00200"/>
<dbReference type="PATRIC" id="fig|224308.179.peg.20"/>
<dbReference type="eggNOG" id="COG0718">
    <property type="taxonomic scope" value="Bacteria"/>
</dbReference>
<dbReference type="InParanoid" id="P24281"/>
<dbReference type="OrthoDB" id="9795263at2"/>
<dbReference type="PhylomeDB" id="P24281"/>
<dbReference type="BioCyc" id="BSUB:BSU00200-MONOMER"/>
<dbReference type="Proteomes" id="UP000001570">
    <property type="component" value="Chromosome"/>
</dbReference>
<dbReference type="GO" id="GO:0043590">
    <property type="term" value="C:bacterial nucleoid"/>
    <property type="evidence" value="ECO:0007669"/>
    <property type="project" value="UniProtKB-UniRule"/>
</dbReference>
<dbReference type="GO" id="GO:0005829">
    <property type="term" value="C:cytosol"/>
    <property type="evidence" value="ECO:0000318"/>
    <property type="project" value="GO_Central"/>
</dbReference>
<dbReference type="GO" id="GO:0003677">
    <property type="term" value="F:DNA binding"/>
    <property type="evidence" value="ECO:0000318"/>
    <property type="project" value="GO_Central"/>
</dbReference>
<dbReference type="FunFam" id="3.30.1310.10:FF:000002">
    <property type="entry name" value="Nucleoid-associated protein IKC_06587"/>
    <property type="match status" value="1"/>
</dbReference>
<dbReference type="Gene3D" id="3.30.1310.10">
    <property type="entry name" value="Nucleoid-associated protein YbaB-like domain"/>
    <property type="match status" value="1"/>
</dbReference>
<dbReference type="HAMAP" id="MF_00274">
    <property type="entry name" value="DNA_YbaB_EbfC"/>
    <property type="match status" value="1"/>
</dbReference>
<dbReference type="InterPro" id="IPR036894">
    <property type="entry name" value="YbaB-like_sf"/>
</dbReference>
<dbReference type="InterPro" id="IPR004401">
    <property type="entry name" value="YbaB/EbfC"/>
</dbReference>
<dbReference type="NCBIfam" id="TIGR00103">
    <property type="entry name" value="DNA_YbaB_EbfC"/>
    <property type="match status" value="1"/>
</dbReference>
<dbReference type="PANTHER" id="PTHR33449">
    <property type="entry name" value="NUCLEOID-ASSOCIATED PROTEIN YBAB"/>
    <property type="match status" value="1"/>
</dbReference>
<dbReference type="PANTHER" id="PTHR33449:SF1">
    <property type="entry name" value="NUCLEOID-ASSOCIATED PROTEIN YBAB"/>
    <property type="match status" value="1"/>
</dbReference>
<dbReference type="Pfam" id="PF02575">
    <property type="entry name" value="YbaB_DNA_bd"/>
    <property type="match status" value="1"/>
</dbReference>
<dbReference type="PIRSF" id="PIRSF004555">
    <property type="entry name" value="UCP004555"/>
    <property type="match status" value="1"/>
</dbReference>
<dbReference type="SUPFAM" id="SSF82607">
    <property type="entry name" value="YbaB-like"/>
    <property type="match status" value="1"/>
</dbReference>
<protein>
    <recommendedName>
        <fullName evidence="1">Nucleoid-associated protein YaaK</fullName>
    </recommendedName>
</protein>
<feature type="chain" id="PRO_0000170365" description="Nucleoid-associated protein YaaK">
    <location>
        <begin position="1"/>
        <end position="107"/>
    </location>
</feature>
<feature type="region of interest" description="Disordered" evidence="2">
    <location>
        <begin position="1"/>
        <end position="24"/>
    </location>
</feature>
<feature type="compositionally biased region" description="Low complexity" evidence="2">
    <location>
        <begin position="8"/>
        <end position="17"/>
    </location>
</feature>
<organism>
    <name type="scientific">Bacillus subtilis (strain 168)</name>
    <dbReference type="NCBI Taxonomy" id="224308"/>
    <lineage>
        <taxon>Bacteria</taxon>
        <taxon>Bacillati</taxon>
        <taxon>Bacillota</taxon>
        <taxon>Bacilli</taxon>
        <taxon>Bacillales</taxon>
        <taxon>Bacillaceae</taxon>
        <taxon>Bacillus</taxon>
    </lineage>
</organism>
<reference key="1">
    <citation type="journal article" date="1990" name="Nucleic Acids Res.">
        <title>Molecular cloning, genetic characterization and DNA sequence analysis of the recM region of Bacillus subtilis.</title>
        <authorList>
            <person name="Alonso J.C."/>
            <person name="Shirahige K."/>
            <person name="Ogasawara N."/>
        </authorList>
    </citation>
    <scope>NUCLEOTIDE SEQUENCE [GENOMIC DNA]</scope>
    <source>
        <strain>168 / YB886 / BG214</strain>
    </source>
</reference>
<reference key="2">
    <citation type="journal article" date="1994" name="DNA Res.">
        <title>Systematic sequencing of the 180 kilobase region of the Bacillus subtilis chromosome containing the replication origin.</title>
        <authorList>
            <person name="Ogasawara N."/>
            <person name="Nakai S."/>
            <person name="Yoshikawa H."/>
        </authorList>
    </citation>
    <scope>NUCLEOTIDE SEQUENCE [GENOMIC DNA]</scope>
    <source>
        <strain>168</strain>
    </source>
</reference>
<reference key="3">
    <citation type="journal article" date="1997" name="Nature">
        <title>The complete genome sequence of the Gram-positive bacterium Bacillus subtilis.</title>
        <authorList>
            <person name="Kunst F."/>
            <person name="Ogasawara N."/>
            <person name="Moszer I."/>
            <person name="Albertini A.M."/>
            <person name="Alloni G."/>
            <person name="Azevedo V."/>
            <person name="Bertero M.G."/>
            <person name="Bessieres P."/>
            <person name="Bolotin A."/>
            <person name="Borchert S."/>
            <person name="Borriss R."/>
            <person name="Boursier L."/>
            <person name="Brans A."/>
            <person name="Braun M."/>
            <person name="Brignell S.C."/>
            <person name="Bron S."/>
            <person name="Brouillet S."/>
            <person name="Bruschi C.V."/>
            <person name="Caldwell B."/>
            <person name="Capuano V."/>
            <person name="Carter N.M."/>
            <person name="Choi S.-K."/>
            <person name="Codani J.-J."/>
            <person name="Connerton I.F."/>
            <person name="Cummings N.J."/>
            <person name="Daniel R.A."/>
            <person name="Denizot F."/>
            <person name="Devine K.M."/>
            <person name="Duesterhoeft A."/>
            <person name="Ehrlich S.D."/>
            <person name="Emmerson P.T."/>
            <person name="Entian K.-D."/>
            <person name="Errington J."/>
            <person name="Fabret C."/>
            <person name="Ferrari E."/>
            <person name="Foulger D."/>
            <person name="Fritz C."/>
            <person name="Fujita M."/>
            <person name="Fujita Y."/>
            <person name="Fuma S."/>
            <person name="Galizzi A."/>
            <person name="Galleron N."/>
            <person name="Ghim S.-Y."/>
            <person name="Glaser P."/>
            <person name="Goffeau A."/>
            <person name="Golightly E.J."/>
            <person name="Grandi G."/>
            <person name="Guiseppi G."/>
            <person name="Guy B.J."/>
            <person name="Haga K."/>
            <person name="Haiech J."/>
            <person name="Harwood C.R."/>
            <person name="Henaut A."/>
            <person name="Hilbert H."/>
            <person name="Holsappel S."/>
            <person name="Hosono S."/>
            <person name="Hullo M.-F."/>
            <person name="Itaya M."/>
            <person name="Jones L.-M."/>
            <person name="Joris B."/>
            <person name="Karamata D."/>
            <person name="Kasahara Y."/>
            <person name="Klaerr-Blanchard M."/>
            <person name="Klein C."/>
            <person name="Kobayashi Y."/>
            <person name="Koetter P."/>
            <person name="Koningstein G."/>
            <person name="Krogh S."/>
            <person name="Kumano M."/>
            <person name="Kurita K."/>
            <person name="Lapidus A."/>
            <person name="Lardinois S."/>
            <person name="Lauber J."/>
            <person name="Lazarevic V."/>
            <person name="Lee S.-M."/>
            <person name="Levine A."/>
            <person name="Liu H."/>
            <person name="Masuda S."/>
            <person name="Mauel C."/>
            <person name="Medigue C."/>
            <person name="Medina N."/>
            <person name="Mellado R.P."/>
            <person name="Mizuno M."/>
            <person name="Moestl D."/>
            <person name="Nakai S."/>
            <person name="Noback M."/>
            <person name="Noone D."/>
            <person name="O'Reilly M."/>
            <person name="Ogawa K."/>
            <person name="Ogiwara A."/>
            <person name="Oudega B."/>
            <person name="Park S.-H."/>
            <person name="Parro V."/>
            <person name="Pohl T.M."/>
            <person name="Portetelle D."/>
            <person name="Porwollik S."/>
            <person name="Prescott A.M."/>
            <person name="Presecan E."/>
            <person name="Pujic P."/>
            <person name="Purnelle B."/>
            <person name="Rapoport G."/>
            <person name="Rey M."/>
            <person name="Reynolds S."/>
            <person name="Rieger M."/>
            <person name="Rivolta C."/>
            <person name="Rocha E."/>
            <person name="Roche B."/>
            <person name="Rose M."/>
            <person name="Sadaie Y."/>
            <person name="Sato T."/>
            <person name="Scanlan E."/>
            <person name="Schleich S."/>
            <person name="Schroeter R."/>
            <person name="Scoffone F."/>
            <person name="Sekiguchi J."/>
            <person name="Sekowska A."/>
            <person name="Seror S.J."/>
            <person name="Serror P."/>
            <person name="Shin B.-S."/>
            <person name="Soldo B."/>
            <person name="Sorokin A."/>
            <person name="Tacconi E."/>
            <person name="Takagi T."/>
            <person name="Takahashi H."/>
            <person name="Takemaru K."/>
            <person name="Takeuchi M."/>
            <person name="Tamakoshi A."/>
            <person name="Tanaka T."/>
            <person name="Terpstra P."/>
            <person name="Tognoni A."/>
            <person name="Tosato V."/>
            <person name="Uchiyama S."/>
            <person name="Vandenbol M."/>
            <person name="Vannier F."/>
            <person name="Vassarotti A."/>
            <person name="Viari A."/>
            <person name="Wambutt R."/>
            <person name="Wedler E."/>
            <person name="Wedler H."/>
            <person name="Weitzenegger T."/>
            <person name="Winters P."/>
            <person name="Wipat A."/>
            <person name="Yamamoto H."/>
            <person name="Yamane K."/>
            <person name="Yasumoto K."/>
            <person name="Yata K."/>
            <person name="Yoshida K."/>
            <person name="Yoshikawa H.-F."/>
            <person name="Zumstein E."/>
            <person name="Yoshikawa H."/>
            <person name="Danchin A."/>
        </authorList>
    </citation>
    <scope>NUCLEOTIDE SEQUENCE [LARGE SCALE GENOMIC DNA]</scope>
    <source>
        <strain>168</strain>
    </source>
</reference>
<sequence>MRGGMGNMQKMMKQMQKMQKDMAKAQEELAEKVVEGTAGGGMVTVKANGQKEILDVIIKEEVVDPEDIDMLQDLVLAATNEALKKVDEITNETMGQFTKGMNMPGLF</sequence>